<evidence type="ECO:0000255" key="1">
    <source>
        <dbReference type="HAMAP-Rule" id="MF_00815"/>
    </source>
</evidence>
<feature type="chain" id="PRO_0000073253" description="ATP synthase gamma chain">
    <location>
        <begin position="1"/>
        <end position="291"/>
    </location>
</feature>
<organism>
    <name type="scientific">Buchnera aphidicola subsp. Baizongia pistaciae (strain Bp)</name>
    <dbReference type="NCBI Taxonomy" id="224915"/>
    <lineage>
        <taxon>Bacteria</taxon>
        <taxon>Pseudomonadati</taxon>
        <taxon>Pseudomonadota</taxon>
        <taxon>Gammaproteobacteria</taxon>
        <taxon>Enterobacterales</taxon>
        <taxon>Erwiniaceae</taxon>
        <taxon>Buchnera</taxon>
    </lineage>
</organism>
<reference key="1">
    <citation type="journal article" date="2003" name="Proc. Natl. Acad. Sci. U.S.A.">
        <title>Reductive genome evolution in Buchnera aphidicola.</title>
        <authorList>
            <person name="van Ham R.C.H.J."/>
            <person name="Kamerbeek J."/>
            <person name="Palacios C."/>
            <person name="Rausell C."/>
            <person name="Abascal F."/>
            <person name="Bastolla U."/>
            <person name="Fernandez J.M."/>
            <person name="Jimenez L."/>
            <person name="Postigo M."/>
            <person name="Silva F.J."/>
            <person name="Tamames J."/>
            <person name="Viguera E."/>
            <person name="Latorre A."/>
            <person name="Valencia A."/>
            <person name="Moran F."/>
            <person name="Moya A."/>
        </authorList>
    </citation>
    <scope>NUCLEOTIDE SEQUENCE [LARGE SCALE GENOMIC DNA]</scope>
    <source>
        <strain>Bp</strain>
    </source>
</reference>
<sequence length="291" mass="33522">MIGIREIRSKMKSINNTKKITKAMEMVSISKLRKIKKRMCSSRPYFNIINQVISHVITGNLEHYHTYFNQRNVKRIGVIIVSTDRGLCGNLNTLLFKKVLEVLTEHINEHILNNLFVIGTKALTFFKSFTNNIVFSLSNLKNDFKIIDLMEMIRISLEMYISGKIDKLFLAYNKFNSTIIQTPTLVQLLPILKPKLGKKEVKKTWDYIYESNSKVLLNVVLNRYIEFQIYQSILENLVCEQASRMLAMKQATDNSADLLKALQMNYNKVRQSSITQELTEIISGAAAVSLN</sequence>
<accession>Q89B40</accession>
<comment type="function">
    <text evidence="1">Produces ATP from ADP in the presence of a proton gradient across the membrane. The gamma chain is believed to be important in regulating ATPase activity and the flow of protons through the CF(0) complex.</text>
</comment>
<comment type="subunit">
    <text evidence="1">F-type ATPases have 2 components, CF(1) - the catalytic core - and CF(0) - the membrane proton channel. CF(1) has five subunits: alpha(3), beta(3), gamma(1), delta(1), epsilon(1). CF(0) has three main subunits: a, b and c.</text>
</comment>
<comment type="subcellular location">
    <subcellularLocation>
        <location evidence="1">Cell membrane</location>
        <topology evidence="1">Peripheral membrane protein</topology>
    </subcellularLocation>
</comment>
<comment type="similarity">
    <text evidence="1">Belongs to the ATPase gamma chain family.</text>
</comment>
<gene>
    <name evidence="1" type="primary">atpG</name>
    <name type="ordered locus">bbp_007</name>
</gene>
<dbReference type="EMBL" id="AE016826">
    <property type="protein sequence ID" value="AAO26751.1"/>
    <property type="molecule type" value="Genomic_DNA"/>
</dbReference>
<dbReference type="RefSeq" id="WP_011091152.1">
    <property type="nucleotide sequence ID" value="NC_004545.1"/>
</dbReference>
<dbReference type="SMR" id="Q89B40"/>
<dbReference type="STRING" id="224915.bbp_007"/>
<dbReference type="KEGG" id="bab:bbp_007"/>
<dbReference type="eggNOG" id="COG0224">
    <property type="taxonomic scope" value="Bacteria"/>
</dbReference>
<dbReference type="HOGENOM" id="CLU_050669_0_1_6"/>
<dbReference type="OrthoDB" id="9812769at2"/>
<dbReference type="Proteomes" id="UP000000601">
    <property type="component" value="Chromosome"/>
</dbReference>
<dbReference type="GO" id="GO:0005886">
    <property type="term" value="C:plasma membrane"/>
    <property type="evidence" value="ECO:0007669"/>
    <property type="project" value="UniProtKB-SubCell"/>
</dbReference>
<dbReference type="GO" id="GO:0045259">
    <property type="term" value="C:proton-transporting ATP synthase complex"/>
    <property type="evidence" value="ECO:0007669"/>
    <property type="project" value="UniProtKB-KW"/>
</dbReference>
<dbReference type="GO" id="GO:0005524">
    <property type="term" value="F:ATP binding"/>
    <property type="evidence" value="ECO:0007669"/>
    <property type="project" value="UniProtKB-UniRule"/>
</dbReference>
<dbReference type="GO" id="GO:0046933">
    <property type="term" value="F:proton-transporting ATP synthase activity, rotational mechanism"/>
    <property type="evidence" value="ECO:0007669"/>
    <property type="project" value="UniProtKB-UniRule"/>
</dbReference>
<dbReference type="GO" id="GO:0042777">
    <property type="term" value="P:proton motive force-driven plasma membrane ATP synthesis"/>
    <property type="evidence" value="ECO:0007669"/>
    <property type="project" value="UniProtKB-UniRule"/>
</dbReference>
<dbReference type="CDD" id="cd12151">
    <property type="entry name" value="F1-ATPase_gamma"/>
    <property type="match status" value="1"/>
</dbReference>
<dbReference type="FunFam" id="1.10.287.80:FF:000005">
    <property type="entry name" value="ATP synthase gamma chain"/>
    <property type="match status" value="1"/>
</dbReference>
<dbReference type="Gene3D" id="3.40.1380.10">
    <property type="match status" value="1"/>
</dbReference>
<dbReference type="Gene3D" id="1.10.287.80">
    <property type="entry name" value="ATP synthase, gamma subunit, helix hairpin domain"/>
    <property type="match status" value="2"/>
</dbReference>
<dbReference type="HAMAP" id="MF_00815">
    <property type="entry name" value="ATP_synth_gamma_bact"/>
    <property type="match status" value="1"/>
</dbReference>
<dbReference type="InterPro" id="IPR035968">
    <property type="entry name" value="ATP_synth_F1_ATPase_gsu"/>
</dbReference>
<dbReference type="InterPro" id="IPR000131">
    <property type="entry name" value="ATP_synth_F1_gsu"/>
</dbReference>
<dbReference type="InterPro" id="IPR023632">
    <property type="entry name" value="ATP_synth_F1_gsu_CS"/>
</dbReference>
<dbReference type="NCBIfam" id="TIGR01146">
    <property type="entry name" value="ATPsyn_F1gamma"/>
    <property type="match status" value="1"/>
</dbReference>
<dbReference type="PANTHER" id="PTHR11693">
    <property type="entry name" value="ATP SYNTHASE GAMMA CHAIN"/>
    <property type="match status" value="1"/>
</dbReference>
<dbReference type="PANTHER" id="PTHR11693:SF22">
    <property type="entry name" value="ATP SYNTHASE SUBUNIT GAMMA, MITOCHONDRIAL"/>
    <property type="match status" value="1"/>
</dbReference>
<dbReference type="Pfam" id="PF00231">
    <property type="entry name" value="ATP-synt"/>
    <property type="match status" value="1"/>
</dbReference>
<dbReference type="PRINTS" id="PR00126">
    <property type="entry name" value="ATPASEGAMMA"/>
</dbReference>
<dbReference type="SUPFAM" id="SSF52943">
    <property type="entry name" value="ATP synthase (F1-ATPase), gamma subunit"/>
    <property type="match status" value="1"/>
</dbReference>
<dbReference type="PROSITE" id="PS00153">
    <property type="entry name" value="ATPASE_GAMMA"/>
    <property type="match status" value="1"/>
</dbReference>
<keyword id="KW-0066">ATP synthesis</keyword>
<keyword id="KW-1003">Cell membrane</keyword>
<keyword id="KW-0139">CF(1)</keyword>
<keyword id="KW-0375">Hydrogen ion transport</keyword>
<keyword id="KW-0406">Ion transport</keyword>
<keyword id="KW-0472">Membrane</keyword>
<keyword id="KW-1185">Reference proteome</keyword>
<keyword id="KW-0813">Transport</keyword>
<proteinExistence type="inferred from homology"/>
<name>ATPG_BUCBP</name>
<protein>
    <recommendedName>
        <fullName evidence="1">ATP synthase gamma chain</fullName>
    </recommendedName>
    <alternativeName>
        <fullName evidence="1">ATP synthase F1 sector gamma subunit</fullName>
    </alternativeName>
    <alternativeName>
        <fullName evidence="1">F-ATPase gamma subunit</fullName>
    </alternativeName>
</protein>